<organism>
    <name type="scientific">Rattus norvegicus</name>
    <name type="common">Rat</name>
    <dbReference type="NCBI Taxonomy" id="10116"/>
    <lineage>
        <taxon>Eukaryota</taxon>
        <taxon>Metazoa</taxon>
        <taxon>Chordata</taxon>
        <taxon>Craniata</taxon>
        <taxon>Vertebrata</taxon>
        <taxon>Euteleostomi</taxon>
        <taxon>Mammalia</taxon>
        <taxon>Eutheria</taxon>
        <taxon>Euarchontoglires</taxon>
        <taxon>Glires</taxon>
        <taxon>Rodentia</taxon>
        <taxon>Myomorpha</taxon>
        <taxon>Muroidea</taxon>
        <taxon>Muridae</taxon>
        <taxon>Murinae</taxon>
        <taxon>Rattus</taxon>
    </lineage>
</organism>
<name>RAP1A_RAT</name>
<gene>
    <name type="primary">Rap1a</name>
    <name type="synonym">Krev1</name>
</gene>
<accession>P62836</accession>
<accession>P10113</accession>
<dbReference type="EC" id="3.6.5.2" evidence="2"/>
<dbReference type="EMBL" id="BC083813">
    <property type="protein sequence ID" value="AAH83813.1"/>
    <property type="molecule type" value="mRNA"/>
</dbReference>
<dbReference type="PIR" id="A61216">
    <property type="entry name" value="A61216"/>
</dbReference>
<dbReference type="RefSeq" id="NP_001005765.1">
    <property type="nucleotide sequence ID" value="NM_001005765.1"/>
</dbReference>
<dbReference type="RefSeq" id="XP_063137718.1">
    <property type="nucleotide sequence ID" value="XM_063281648.1"/>
</dbReference>
<dbReference type="RefSeq" id="XP_063137719.1">
    <property type="nucleotide sequence ID" value="XM_063281649.1"/>
</dbReference>
<dbReference type="RefSeq" id="XP_063137720.1">
    <property type="nucleotide sequence ID" value="XM_063281650.1"/>
</dbReference>
<dbReference type="RefSeq" id="XP_063137721.1">
    <property type="nucleotide sequence ID" value="XM_063281651.1"/>
</dbReference>
<dbReference type="RefSeq" id="XP_063137722.1">
    <property type="nucleotide sequence ID" value="XM_063281652.1"/>
</dbReference>
<dbReference type="RefSeq" id="XP_063137723.1">
    <property type="nucleotide sequence ID" value="XM_063281653.1"/>
</dbReference>
<dbReference type="SMR" id="P62836"/>
<dbReference type="BioGRID" id="254977">
    <property type="interactions" value="4"/>
</dbReference>
<dbReference type="FunCoup" id="P62836">
    <property type="interactions" value="2985"/>
</dbReference>
<dbReference type="IntAct" id="P62836">
    <property type="interactions" value="1"/>
</dbReference>
<dbReference type="STRING" id="10116.ENSRNOP00000040409"/>
<dbReference type="iPTMnet" id="P62836"/>
<dbReference type="PhosphoSitePlus" id="P62836"/>
<dbReference type="jPOST" id="P62836"/>
<dbReference type="PaxDb" id="10116-ENSRNOP00000040409"/>
<dbReference type="Ensembl" id="ENSRNOT00000047836.5">
    <property type="protein sequence ID" value="ENSRNOP00000040409.2"/>
    <property type="gene ID" value="ENSRNOG00000032463.5"/>
</dbReference>
<dbReference type="GeneID" id="295347"/>
<dbReference type="KEGG" id="rno:295347"/>
<dbReference type="UCSC" id="RGD:1359694">
    <property type="organism name" value="rat"/>
</dbReference>
<dbReference type="AGR" id="RGD:1359694"/>
<dbReference type="CTD" id="5906"/>
<dbReference type="RGD" id="1359694">
    <property type="gene designation" value="Rap1a"/>
</dbReference>
<dbReference type="eggNOG" id="KOG0395">
    <property type="taxonomic scope" value="Eukaryota"/>
</dbReference>
<dbReference type="GeneTree" id="ENSGT00940000160251"/>
<dbReference type="HOGENOM" id="CLU_041217_9_8_1"/>
<dbReference type="InParanoid" id="P62836"/>
<dbReference type="OMA" id="EYKLVVM"/>
<dbReference type="OrthoDB" id="47937at9989"/>
<dbReference type="PhylomeDB" id="P62836"/>
<dbReference type="TreeFam" id="TF313014"/>
<dbReference type="Reactome" id="R-RNO-170968">
    <property type="pathway name" value="Frs2-mediated activation"/>
</dbReference>
<dbReference type="Reactome" id="R-RNO-170984">
    <property type="pathway name" value="ARMS-mediated activation"/>
</dbReference>
<dbReference type="Reactome" id="R-RNO-354192">
    <property type="pathway name" value="Integrin signaling"/>
</dbReference>
<dbReference type="Reactome" id="R-RNO-354194">
    <property type="pathway name" value="GRB2:SOS provides linkage to MAPK signaling for Integrins"/>
</dbReference>
<dbReference type="Reactome" id="R-RNO-372708">
    <property type="pathway name" value="p130Cas linkage to MAPK signaling for integrins"/>
</dbReference>
<dbReference type="Reactome" id="R-RNO-381676">
    <property type="pathway name" value="Glucagon-like Peptide-1 (GLP1) regulates insulin secretion"/>
</dbReference>
<dbReference type="Reactome" id="R-RNO-392517">
    <property type="pathway name" value="Rap1 signalling"/>
</dbReference>
<dbReference type="Reactome" id="R-RNO-5674135">
    <property type="pathway name" value="MAP2K and MAPK activation"/>
</dbReference>
<dbReference type="Reactome" id="R-RNO-6798695">
    <property type="pathway name" value="Neutrophil degranulation"/>
</dbReference>
<dbReference type="Reactome" id="R-RNO-8875555">
    <property type="pathway name" value="MET activates RAP1 and RAC1"/>
</dbReference>
<dbReference type="PRO" id="PR:P62836"/>
<dbReference type="Proteomes" id="UP000002494">
    <property type="component" value="Chromosome 2"/>
</dbReference>
<dbReference type="Bgee" id="ENSRNOG00000032463">
    <property type="expression patterns" value="Expressed in thymus and 20 other cell types or tissues"/>
</dbReference>
<dbReference type="GO" id="GO:0070161">
    <property type="term" value="C:anchoring junction"/>
    <property type="evidence" value="ECO:0007669"/>
    <property type="project" value="UniProtKB-SubCell"/>
</dbReference>
<dbReference type="GO" id="GO:0030054">
    <property type="term" value="C:cell junction"/>
    <property type="evidence" value="ECO:0000250"/>
    <property type="project" value="UniProtKB"/>
</dbReference>
<dbReference type="GO" id="GO:0005737">
    <property type="term" value="C:cytoplasm"/>
    <property type="evidence" value="ECO:0000314"/>
    <property type="project" value="UniProtKB"/>
</dbReference>
<dbReference type="GO" id="GO:0005829">
    <property type="term" value="C:cytosol"/>
    <property type="evidence" value="ECO:0000304"/>
    <property type="project" value="Reactome"/>
</dbReference>
<dbReference type="GO" id="GO:0005769">
    <property type="term" value="C:early endosome"/>
    <property type="evidence" value="ECO:0000314"/>
    <property type="project" value="UniProtKB"/>
</dbReference>
<dbReference type="GO" id="GO:0098978">
    <property type="term" value="C:glutamatergic synapse"/>
    <property type="evidence" value="ECO:0000266"/>
    <property type="project" value="RGD"/>
</dbReference>
<dbReference type="GO" id="GO:0032045">
    <property type="term" value="C:guanyl-nucleotide exchange factor complex"/>
    <property type="evidence" value="ECO:0000266"/>
    <property type="project" value="RGD"/>
</dbReference>
<dbReference type="GO" id="GO:0005770">
    <property type="term" value="C:late endosome"/>
    <property type="evidence" value="ECO:0000314"/>
    <property type="project" value="UniProtKB"/>
</dbReference>
<dbReference type="GO" id="GO:0043005">
    <property type="term" value="C:neuron projection"/>
    <property type="evidence" value="ECO:0000266"/>
    <property type="project" value="RGD"/>
</dbReference>
<dbReference type="GO" id="GO:0048471">
    <property type="term" value="C:perinuclear region of cytoplasm"/>
    <property type="evidence" value="ECO:0000314"/>
    <property type="project" value="UniProtKB"/>
</dbReference>
<dbReference type="GO" id="GO:0045335">
    <property type="term" value="C:phagocytic vesicle"/>
    <property type="evidence" value="ECO:0000314"/>
    <property type="project" value="RGD"/>
</dbReference>
<dbReference type="GO" id="GO:0005886">
    <property type="term" value="C:plasma membrane"/>
    <property type="evidence" value="ECO:0000266"/>
    <property type="project" value="RGD"/>
</dbReference>
<dbReference type="GO" id="GO:0098793">
    <property type="term" value="C:presynapse"/>
    <property type="evidence" value="ECO:0007669"/>
    <property type="project" value="GOC"/>
</dbReference>
<dbReference type="GO" id="GO:0097225">
    <property type="term" value="C:sperm midpiece"/>
    <property type="evidence" value="ECO:0000250"/>
    <property type="project" value="UniProtKB"/>
</dbReference>
<dbReference type="GO" id="GO:0003925">
    <property type="term" value="F:G protein activity"/>
    <property type="evidence" value="ECO:0007669"/>
    <property type="project" value="UniProtKB-EC"/>
</dbReference>
<dbReference type="GO" id="GO:0019003">
    <property type="term" value="F:GDP binding"/>
    <property type="evidence" value="ECO:0000318"/>
    <property type="project" value="GO_Central"/>
</dbReference>
<dbReference type="GO" id="GO:0005525">
    <property type="term" value="F:GTP binding"/>
    <property type="evidence" value="ECO:0000314"/>
    <property type="project" value="RGD"/>
</dbReference>
<dbReference type="GO" id="GO:0003924">
    <property type="term" value="F:GTPase activity"/>
    <property type="evidence" value="ECO:0000266"/>
    <property type="project" value="RGD"/>
</dbReference>
<dbReference type="GO" id="GO:0005085">
    <property type="term" value="F:guanyl-nucleotide exchange factor activity"/>
    <property type="evidence" value="ECO:0000315"/>
    <property type="project" value="UniProtKB"/>
</dbReference>
<dbReference type="GO" id="GO:0044877">
    <property type="term" value="F:protein-containing complex binding"/>
    <property type="evidence" value="ECO:0000266"/>
    <property type="project" value="RGD"/>
</dbReference>
<dbReference type="GO" id="GO:0031267">
    <property type="term" value="F:small GTPase binding"/>
    <property type="evidence" value="ECO:0000266"/>
    <property type="project" value="RGD"/>
</dbReference>
<dbReference type="GO" id="GO:0071320">
    <property type="term" value="P:cellular response to cAMP"/>
    <property type="evidence" value="ECO:0000270"/>
    <property type="project" value="RGD"/>
</dbReference>
<dbReference type="GO" id="GO:1904322">
    <property type="term" value="P:cellular response to forskolin"/>
    <property type="evidence" value="ECO:0000314"/>
    <property type="project" value="RGD"/>
</dbReference>
<dbReference type="GO" id="GO:1990090">
    <property type="term" value="P:cellular response to nerve growth factor stimulus"/>
    <property type="evidence" value="ECO:0000314"/>
    <property type="project" value="UniProtKB"/>
</dbReference>
<dbReference type="GO" id="GO:0061028">
    <property type="term" value="P:establishment of endothelial barrier"/>
    <property type="evidence" value="ECO:0000250"/>
    <property type="project" value="UniProtKB"/>
</dbReference>
<dbReference type="GO" id="GO:0097421">
    <property type="term" value="P:liver regeneration"/>
    <property type="evidence" value="ECO:0000270"/>
    <property type="project" value="RGD"/>
</dbReference>
<dbReference type="GO" id="GO:0032966">
    <property type="term" value="P:negative regulation of collagen biosynthetic process"/>
    <property type="evidence" value="ECO:0000315"/>
    <property type="project" value="RGD"/>
</dbReference>
<dbReference type="GO" id="GO:2000301">
    <property type="term" value="P:negative regulation of synaptic vesicle exocytosis"/>
    <property type="evidence" value="ECO:0000266"/>
    <property type="project" value="RGD"/>
</dbReference>
<dbReference type="GO" id="GO:0038180">
    <property type="term" value="P:nerve growth factor signaling pathway"/>
    <property type="evidence" value="ECO:0000314"/>
    <property type="project" value="UniProtKB"/>
</dbReference>
<dbReference type="GO" id="GO:0007399">
    <property type="term" value="P:nervous system development"/>
    <property type="evidence" value="ECO:0007669"/>
    <property type="project" value="UniProtKB-KW"/>
</dbReference>
<dbReference type="GO" id="GO:0046326">
    <property type="term" value="P:positive regulation of D-glucose import"/>
    <property type="evidence" value="ECO:0000315"/>
    <property type="project" value="RGD"/>
</dbReference>
<dbReference type="GO" id="GO:0070374">
    <property type="term" value="P:positive regulation of ERK1 and ERK2 cascade"/>
    <property type="evidence" value="ECO:0000315"/>
    <property type="project" value="UniProtKB"/>
</dbReference>
<dbReference type="GO" id="GO:0060369">
    <property type="term" value="P:positive regulation of Fc receptor mediated stimulatory signaling pathway"/>
    <property type="evidence" value="ECO:0000315"/>
    <property type="project" value="RGD"/>
</dbReference>
<dbReference type="GO" id="GO:0043547">
    <property type="term" value="P:positive regulation of GTPase activity"/>
    <property type="evidence" value="ECO:0000315"/>
    <property type="project" value="UniProtKB"/>
</dbReference>
<dbReference type="GO" id="GO:0010976">
    <property type="term" value="P:positive regulation of neuron projection development"/>
    <property type="evidence" value="ECO:0000315"/>
    <property type="project" value="UniProtKB"/>
</dbReference>
<dbReference type="GO" id="GO:0050766">
    <property type="term" value="P:positive regulation of phagocytosis"/>
    <property type="evidence" value="ECO:0000315"/>
    <property type="project" value="RGD"/>
</dbReference>
<dbReference type="GO" id="GO:0045860">
    <property type="term" value="P:positive regulation of protein kinase activity"/>
    <property type="evidence" value="ECO:0000315"/>
    <property type="project" value="UniProtKB"/>
</dbReference>
<dbReference type="GO" id="GO:2001214">
    <property type="term" value="P:positive regulation of vasculogenesis"/>
    <property type="evidence" value="ECO:0000250"/>
    <property type="project" value="UniProtKB"/>
</dbReference>
<dbReference type="GO" id="GO:0072659">
    <property type="term" value="P:protein localization to plasma membrane"/>
    <property type="evidence" value="ECO:0000250"/>
    <property type="project" value="UniProtKB"/>
</dbReference>
<dbReference type="GO" id="GO:0032486">
    <property type="term" value="P:Rap protein signal transduction"/>
    <property type="evidence" value="ECO:0000250"/>
    <property type="project" value="UniProtKB"/>
</dbReference>
<dbReference type="GO" id="GO:1901888">
    <property type="term" value="P:regulation of cell junction assembly"/>
    <property type="evidence" value="ECO:0000250"/>
    <property type="project" value="UniProtKB"/>
</dbReference>
<dbReference type="GO" id="GO:0098696">
    <property type="term" value="P:regulation of neurotransmitter receptor localization to postsynaptic specialization membrane"/>
    <property type="evidence" value="ECO:0000266"/>
    <property type="project" value="RGD"/>
</dbReference>
<dbReference type="GO" id="GO:0097327">
    <property type="term" value="P:response to antineoplastic agent"/>
    <property type="evidence" value="ECO:0000314"/>
    <property type="project" value="RGD"/>
</dbReference>
<dbReference type="GO" id="GO:0009743">
    <property type="term" value="P:response to carbohydrate"/>
    <property type="evidence" value="ECO:0000270"/>
    <property type="project" value="RGD"/>
</dbReference>
<dbReference type="GO" id="GO:0007264">
    <property type="term" value="P:small GTPase-mediated signal transduction"/>
    <property type="evidence" value="ECO:0000266"/>
    <property type="project" value="RGD"/>
</dbReference>
<dbReference type="GO" id="GO:0016079">
    <property type="term" value="P:synaptic vesicle exocytosis"/>
    <property type="evidence" value="ECO:0000266"/>
    <property type="project" value="RGD"/>
</dbReference>
<dbReference type="CDD" id="cd04175">
    <property type="entry name" value="Rap1"/>
    <property type="match status" value="1"/>
</dbReference>
<dbReference type="FunFam" id="3.40.50.300:FF:000182">
    <property type="entry name" value="ras-related protein Rap-1b"/>
    <property type="match status" value="1"/>
</dbReference>
<dbReference type="Gene3D" id="3.40.50.300">
    <property type="entry name" value="P-loop containing nucleotide triphosphate hydrolases"/>
    <property type="match status" value="1"/>
</dbReference>
<dbReference type="InterPro" id="IPR027417">
    <property type="entry name" value="P-loop_NTPase"/>
</dbReference>
<dbReference type="InterPro" id="IPR038851">
    <property type="entry name" value="Rap1"/>
</dbReference>
<dbReference type="InterPro" id="IPR005225">
    <property type="entry name" value="Small_GTP-bd"/>
</dbReference>
<dbReference type="InterPro" id="IPR001806">
    <property type="entry name" value="Small_GTPase"/>
</dbReference>
<dbReference type="InterPro" id="IPR020849">
    <property type="entry name" value="Small_GTPase_Ras-type"/>
</dbReference>
<dbReference type="NCBIfam" id="TIGR00231">
    <property type="entry name" value="small_GTP"/>
    <property type="match status" value="1"/>
</dbReference>
<dbReference type="PANTHER" id="PTHR24070">
    <property type="entry name" value="RAS, DI-RAS, AND RHEB FAMILY MEMBERS OF SMALL GTPASE SUPERFAMILY"/>
    <property type="match status" value="1"/>
</dbReference>
<dbReference type="Pfam" id="PF00071">
    <property type="entry name" value="Ras"/>
    <property type="match status" value="1"/>
</dbReference>
<dbReference type="PRINTS" id="PR00449">
    <property type="entry name" value="RASTRNSFRMNG"/>
</dbReference>
<dbReference type="SMART" id="SM00175">
    <property type="entry name" value="RAB"/>
    <property type="match status" value="1"/>
</dbReference>
<dbReference type="SMART" id="SM00176">
    <property type="entry name" value="RAN"/>
    <property type="match status" value="1"/>
</dbReference>
<dbReference type="SMART" id="SM00173">
    <property type="entry name" value="RAS"/>
    <property type="match status" value="1"/>
</dbReference>
<dbReference type="SMART" id="SM00174">
    <property type="entry name" value="RHO"/>
    <property type="match status" value="1"/>
</dbReference>
<dbReference type="SUPFAM" id="SSF52540">
    <property type="entry name" value="P-loop containing nucleoside triphosphate hydrolases"/>
    <property type="match status" value="1"/>
</dbReference>
<dbReference type="PROSITE" id="PS51421">
    <property type="entry name" value="RAS"/>
    <property type="match status" value="1"/>
</dbReference>
<protein>
    <recommendedName>
        <fullName>Ras-related protein Rap-1A</fullName>
        <ecNumber evidence="2">3.6.5.2</ecNumber>
    </recommendedName>
    <alternativeName>
        <fullName>Ras-related protein Krev-1</fullName>
    </alternativeName>
</protein>
<feature type="chain" id="PRO_0000030203" description="Ras-related protein Rap-1A">
    <location>
        <begin position="1"/>
        <end position="181"/>
    </location>
</feature>
<feature type="propeptide" id="PRO_0000030204" description="Removed in mature form" evidence="1">
    <location>
        <begin position="182"/>
        <end position="184"/>
    </location>
</feature>
<feature type="short sequence motif" description="Effector region" evidence="6">
    <location>
        <begin position="32"/>
        <end position="40"/>
    </location>
</feature>
<feature type="binding site" evidence="3">
    <location>
        <begin position="10"/>
        <end position="18"/>
    </location>
    <ligand>
        <name>GTP</name>
        <dbReference type="ChEBI" id="CHEBI:37565"/>
    </ligand>
</feature>
<feature type="binding site" evidence="3">
    <location>
        <begin position="29"/>
        <end position="35"/>
    </location>
    <ligand>
        <name>GTP</name>
        <dbReference type="ChEBI" id="CHEBI:37565"/>
    </ligand>
</feature>
<feature type="binding site" evidence="3">
    <location>
        <position position="60"/>
    </location>
    <ligand>
        <name>GTP</name>
        <dbReference type="ChEBI" id="CHEBI:37565"/>
    </ligand>
</feature>
<feature type="binding site" evidence="3">
    <location>
        <begin position="116"/>
        <end position="119"/>
    </location>
    <ligand>
        <name>GTP</name>
        <dbReference type="ChEBI" id="CHEBI:37565"/>
    </ligand>
</feature>
<feature type="modified residue" description="Cysteine methyl ester" evidence="3">
    <location>
        <position position="181"/>
    </location>
</feature>
<feature type="lipid moiety-binding region" description="S-geranylgeranyl cysteine" evidence="3">
    <location>
        <position position="181"/>
    </location>
</feature>
<reference key="1">
    <citation type="journal article" date="1989" name="Cell">
        <title>A ras-related gene with transformation suppressor activity.</title>
        <authorList>
            <person name="Kitayama H."/>
            <person name="Sugimoto Y."/>
            <person name="Matsuzaki T."/>
            <person name="Ikawa Y."/>
            <person name="Noda M."/>
        </authorList>
    </citation>
    <scope>NUCLEOTIDE SEQUENCE [MRNA]</scope>
</reference>
<reference key="2">
    <citation type="journal article" date="2004" name="Genome Res.">
        <title>The status, quality, and expansion of the NIH full-length cDNA project: the Mammalian Gene Collection (MGC).</title>
        <authorList>
            <consortium name="The MGC Project Team"/>
        </authorList>
    </citation>
    <scope>NUCLEOTIDE SEQUENCE [LARGE SCALE MRNA]</scope>
    <source>
        <tissue>Kidney</tissue>
    </source>
</reference>
<reference key="3">
    <citation type="journal article" date="2001" name="EMBO J.">
        <title>Phospholipase C(epsilon): a novel Ras effector.</title>
        <authorList>
            <person name="Kelley G.G."/>
            <person name="Reks S.E."/>
            <person name="Ondrako J.M."/>
            <person name="Smrcka A.V."/>
        </authorList>
    </citation>
    <scope>INTERACTION WITH PLCE1</scope>
</reference>
<reference key="4">
    <citation type="journal article" date="2007" name="J. Cell Biol.">
        <title>Rap1-PDZ-GEF1 interacts with a neurotrophin receptor at late endosomes, leading to sustained activation of Rap1 and ERK and neurite outgrowth.</title>
        <authorList>
            <person name="Hisata S."/>
            <person name="Sakisaka T."/>
            <person name="Baba T."/>
            <person name="Yamada T."/>
            <person name="Aoki K."/>
            <person name="Matsuda M."/>
            <person name="Takai Y."/>
        </authorList>
    </citation>
    <scope>FUNCTION</scope>
    <scope>SUBCELLULAR LOCATION</scope>
</reference>
<evidence type="ECO:0000250" key="1"/>
<evidence type="ECO:0000250" key="2">
    <source>
        <dbReference type="UniProtKB" id="P61224"/>
    </source>
</evidence>
<evidence type="ECO:0000250" key="3">
    <source>
        <dbReference type="UniProtKB" id="P62834"/>
    </source>
</evidence>
<evidence type="ECO:0000250" key="4">
    <source>
        <dbReference type="UniProtKB" id="P62835"/>
    </source>
</evidence>
<evidence type="ECO:0000269" key="5">
    <source>
    </source>
</evidence>
<evidence type="ECO:0000305" key="6"/>
<sequence>MREYKLVVLGSGGVGKSALTVQFVQGIFVEKYDPTIEDSYRKQVEVDCQQCMLEILDTAGTEQFTAMRDLYMKNGQGFALVYSITAQSTFNDLQDLREQILRVKDTEDVPMILVGNKCDLEDERVVGKEQGQNLARQWCNCAFLESSAKSKINVNEIFYDLVRQINRKTPVEKKKPKKKSCLLL</sequence>
<keyword id="KW-0965">Cell junction</keyword>
<keyword id="KW-1003">Cell membrane</keyword>
<keyword id="KW-0963">Cytoplasm</keyword>
<keyword id="KW-0967">Endosome</keyword>
<keyword id="KW-0342">GTP-binding</keyword>
<keyword id="KW-0378">Hydrolase</keyword>
<keyword id="KW-0449">Lipoprotein</keyword>
<keyword id="KW-0472">Membrane</keyword>
<keyword id="KW-0488">Methylation</keyword>
<keyword id="KW-0524">Neurogenesis</keyword>
<keyword id="KW-0547">Nucleotide-binding</keyword>
<keyword id="KW-0636">Prenylation</keyword>
<keyword id="KW-1185">Reference proteome</keyword>
<keyword id="KW-0043">Tumor suppressor</keyword>
<comment type="function">
    <text evidence="3 5">Counteracts the mitogenic function of Ras, at least partly because it can interact with Ras GAPs and RAF in a competitive manner. Together with ITGB1BP1, regulates KRIT1 localization to microtubules and membranes (By similarity). Plays a role in nerve growth factor (NGF)-induced neurite outgrowth. Plays a role in the regulation of embryonic blood vessel formation. Involved in the establishment of basal endothelial barrier function. Facilitates the progressive accumulation of CDH1 at mature desmosome junctions via cAMP-dependent signaling and its interaction with PKP3 (By similarity). May be involved in the regulation of the vascular endothelial growth factor receptor KDR expression at endothelial cell-cell junctions.</text>
</comment>
<comment type="catalytic activity">
    <reaction evidence="2">
        <text>GTP + H2O = GDP + phosphate + H(+)</text>
        <dbReference type="Rhea" id="RHEA:19669"/>
        <dbReference type="ChEBI" id="CHEBI:15377"/>
        <dbReference type="ChEBI" id="CHEBI:15378"/>
        <dbReference type="ChEBI" id="CHEBI:37565"/>
        <dbReference type="ChEBI" id="CHEBI:43474"/>
        <dbReference type="ChEBI" id="CHEBI:58189"/>
        <dbReference type="EC" id="3.6.5.2"/>
    </reaction>
</comment>
<comment type="activity regulation">
    <text evidence="1">Activated by guanine nucleotide-exchange factors (GEF) EPAC and EPAC2 in a cAMP-dependent manner, and GFR.</text>
</comment>
<comment type="subunit">
    <text evidence="3 4">Found in a complex, at least composed of ITGB1BP1, KRIT1 and RAP1A. Interacts (active GTP-bound form preferentially) with KRIT1 (via C-terminus FERM domain); the interaction does not induce the opening conformation of KRIT1. Found in a complex composed of CDH1, RAP1A and PKP3; PKP3 acts as a scaffold protein within the complex, the complex is required for CDH1 localization to mature desmosome cell junctions (By similarity). In its GTP-bound form interacts with PLCE1 and RADIL. Interacts with SGSM1, SGSM2 and SGSM3. Interacts (via GTP-bound active form) with RAPGEF2 (via Ras-associating domain) (By similarity). Interacts with TBC1D21 (By similarity). Interacts with RAP1GDS1 (By similarity).</text>
</comment>
<comment type="subcellular location">
    <subcellularLocation>
        <location evidence="1">Cell membrane</location>
        <topology evidence="1">Lipid-anchor</topology>
    </subcellularLocation>
    <subcellularLocation>
        <location evidence="5">Cytoplasm</location>
        <location evidence="5">Perinuclear region</location>
    </subcellularLocation>
    <subcellularLocation>
        <location evidence="5">Early endosome</location>
    </subcellularLocation>
    <subcellularLocation>
        <location evidence="5">Late endosome</location>
    </subcellularLocation>
    <subcellularLocation>
        <location evidence="1">Cytoplasm</location>
    </subcellularLocation>
    <subcellularLocation>
        <location evidence="1">Cell junction</location>
    </subcellularLocation>
    <text evidence="1">Localized with RAPGEF2 at cell-cell junctions. Colocalized with RAPGEF2 in the perinuclear region (By similarity). Recruited from early endosome to late endosome compartment after nerve growth factor (NGF) stimulation.</text>
</comment>
<comment type="similarity">
    <text evidence="6">Belongs to the small GTPase superfamily. Ras family.</text>
</comment>
<proteinExistence type="evidence at protein level"/>